<keyword id="KW-1185">Reference proteome</keyword>
<keyword id="KW-0687">Ribonucleoprotein</keyword>
<keyword id="KW-0689">Ribosomal protein</keyword>
<reference key="1">
    <citation type="journal article" date="2008" name="Science">
        <title>Genome of an endosymbiont coupling N2 fixation to cellulolysis within RT protist cells in termite gut.</title>
        <authorList>
            <person name="Hongoh Y."/>
            <person name="Sharma V.K."/>
            <person name="Prakash T."/>
            <person name="Noda S."/>
            <person name="Toh H."/>
            <person name="Taylor T.D."/>
            <person name="Kudo T."/>
            <person name="Sakaki Y."/>
            <person name="Toyoda A."/>
            <person name="Hattori M."/>
            <person name="Ohkuma M."/>
        </authorList>
    </citation>
    <scope>NUCLEOTIDE SEQUENCE [LARGE SCALE GENOMIC DNA]</scope>
</reference>
<sequence length="165" mass="18963">MATKIRLQRHGRKGYAFYHIVIADSRAPRNGNFIERIGFYNPNTNPATINLKFERALYWLNVGAQPTDTARNILSCEGIFLKKHLLEGINKGVLSEADAKSKFEAWKNVKRIAIQNEINKIYEQQRIVNKAKLESERVVNQTKTKVLAQKEKLLKEENNTPLPSE</sequence>
<feature type="chain" id="PRO_1000196327" description="Small ribosomal subunit protein bS16">
    <location>
        <begin position="1"/>
        <end position="165"/>
    </location>
</feature>
<dbReference type="EMBL" id="AP010656">
    <property type="protein sequence ID" value="BAG83980.1"/>
    <property type="molecule type" value="Genomic_DNA"/>
</dbReference>
<dbReference type="RefSeq" id="WP_012573736.1">
    <property type="nucleotide sequence ID" value="NC_011565.1"/>
</dbReference>
<dbReference type="SMR" id="B6YS08"/>
<dbReference type="STRING" id="511995.CFPG_717"/>
<dbReference type="KEGG" id="aps:CFPG_717"/>
<dbReference type="eggNOG" id="COG0228">
    <property type="taxonomic scope" value="Bacteria"/>
</dbReference>
<dbReference type="HOGENOM" id="CLU_100590_0_0_10"/>
<dbReference type="OrthoDB" id="9807878at2"/>
<dbReference type="Proteomes" id="UP000000723">
    <property type="component" value="Chromosome"/>
</dbReference>
<dbReference type="GO" id="GO:0005737">
    <property type="term" value="C:cytoplasm"/>
    <property type="evidence" value="ECO:0007669"/>
    <property type="project" value="UniProtKB-ARBA"/>
</dbReference>
<dbReference type="GO" id="GO:0015935">
    <property type="term" value="C:small ribosomal subunit"/>
    <property type="evidence" value="ECO:0007669"/>
    <property type="project" value="TreeGrafter"/>
</dbReference>
<dbReference type="GO" id="GO:0003735">
    <property type="term" value="F:structural constituent of ribosome"/>
    <property type="evidence" value="ECO:0007669"/>
    <property type="project" value="InterPro"/>
</dbReference>
<dbReference type="GO" id="GO:0006412">
    <property type="term" value="P:translation"/>
    <property type="evidence" value="ECO:0007669"/>
    <property type="project" value="UniProtKB-UniRule"/>
</dbReference>
<dbReference type="Gene3D" id="3.30.1320.10">
    <property type="match status" value="1"/>
</dbReference>
<dbReference type="HAMAP" id="MF_00385">
    <property type="entry name" value="Ribosomal_bS16"/>
    <property type="match status" value="1"/>
</dbReference>
<dbReference type="InterPro" id="IPR000307">
    <property type="entry name" value="Ribosomal_bS16"/>
</dbReference>
<dbReference type="InterPro" id="IPR023803">
    <property type="entry name" value="Ribosomal_bS16_dom_sf"/>
</dbReference>
<dbReference type="NCBIfam" id="NF011094">
    <property type="entry name" value="PRK14521.1"/>
    <property type="match status" value="1"/>
</dbReference>
<dbReference type="NCBIfam" id="TIGR00002">
    <property type="entry name" value="S16"/>
    <property type="match status" value="1"/>
</dbReference>
<dbReference type="PANTHER" id="PTHR12919">
    <property type="entry name" value="30S RIBOSOMAL PROTEIN S16"/>
    <property type="match status" value="1"/>
</dbReference>
<dbReference type="PANTHER" id="PTHR12919:SF20">
    <property type="entry name" value="SMALL RIBOSOMAL SUBUNIT PROTEIN BS16M"/>
    <property type="match status" value="1"/>
</dbReference>
<dbReference type="Pfam" id="PF00886">
    <property type="entry name" value="Ribosomal_S16"/>
    <property type="match status" value="1"/>
</dbReference>
<dbReference type="SUPFAM" id="SSF54565">
    <property type="entry name" value="Ribosomal protein S16"/>
    <property type="match status" value="1"/>
</dbReference>
<gene>
    <name evidence="1" type="primary">rpsP</name>
    <name type="ordered locus">CFPG_717</name>
</gene>
<comment type="similarity">
    <text evidence="1">Belongs to the bacterial ribosomal protein bS16 family.</text>
</comment>
<proteinExistence type="inferred from homology"/>
<protein>
    <recommendedName>
        <fullName evidence="1">Small ribosomal subunit protein bS16</fullName>
    </recommendedName>
    <alternativeName>
        <fullName evidence="2">30S ribosomal protein S16</fullName>
    </alternativeName>
</protein>
<name>RS16_AZOPC</name>
<accession>B6YS08</accession>
<evidence type="ECO:0000255" key="1">
    <source>
        <dbReference type="HAMAP-Rule" id="MF_00385"/>
    </source>
</evidence>
<evidence type="ECO:0000305" key="2"/>
<organism>
    <name type="scientific">Azobacteroides pseudotrichonymphae genomovar. CFP2</name>
    <dbReference type="NCBI Taxonomy" id="511995"/>
    <lineage>
        <taxon>Bacteria</taxon>
        <taxon>Pseudomonadati</taxon>
        <taxon>Bacteroidota</taxon>
        <taxon>Bacteroidia</taxon>
        <taxon>Bacteroidales</taxon>
        <taxon>Candidatus Azobacteroides</taxon>
    </lineage>
</organism>